<gene>
    <name evidence="1" type="primary">lpxH</name>
    <name type="ordered locus">Sbal_1599</name>
</gene>
<evidence type="ECO:0000255" key="1">
    <source>
        <dbReference type="HAMAP-Rule" id="MF_00575"/>
    </source>
</evidence>
<accession>A3D300</accession>
<keyword id="KW-0997">Cell inner membrane</keyword>
<keyword id="KW-1003">Cell membrane</keyword>
<keyword id="KW-0378">Hydrolase</keyword>
<keyword id="KW-0441">Lipid A biosynthesis</keyword>
<keyword id="KW-0444">Lipid biosynthesis</keyword>
<keyword id="KW-0443">Lipid metabolism</keyword>
<keyword id="KW-0464">Manganese</keyword>
<keyword id="KW-0472">Membrane</keyword>
<keyword id="KW-0479">Metal-binding</keyword>
<keyword id="KW-1185">Reference proteome</keyword>
<name>LPXH_SHEB5</name>
<dbReference type="EC" id="3.6.1.54" evidence="1"/>
<dbReference type="EMBL" id="CP000563">
    <property type="protein sequence ID" value="ABN61113.1"/>
    <property type="molecule type" value="Genomic_DNA"/>
</dbReference>
<dbReference type="RefSeq" id="WP_011846461.1">
    <property type="nucleotide sequence ID" value="NC_009052.1"/>
</dbReference>
<dbReference type="SMR" id="A3D300"/>
<dbReference type="STRING" id="325240.Sbal_1599"/>
<dbReference type="KEGG" id="sbl:Sbal_1599"/>
<dbReference type="HOGENOM" id="CLU_074586_0_0_6"/>
<dbReference type="OrthoDB" id="9783283at2"/>
<dbReference type="UniPathway" id="UPA00359">
    <property type="reaction ID" value="UER00480"/>
</dbReference>
<dbReference type="Proteomes" id="UP000001557">
    <property type="component" value="Chromosome"/>
</dbReference>
<dbReference type="GO" id="GO:0005737">
    <property type="term" value="C:cytoplasm"/>
    <property type="evidence" value="ECO:0007669"/>
    <property type="project" value="InterPro"/>
</dbReference>
<dbReference type="GO" id="GO:0019897">
    <property type="term" value="C:extrinsic component of plasma membrane"/>
    <property type="evidence" value="ECO:0007669"/>
    <property type="project" value="UniProtKB-UniRule"/>
</dbReference>
<dbReference type="GO" id="GO:0030145">
    <property type="term" value="F:manganese ion binding"/>
    <property type="evidence" value="ECO:0007669"/>
    <property type="project" value="UniProtKB-UniRule"/>
</dbReference>
<dbReference type="GO" id="GO:0008758">
    <property type="term" value="F:UDP-2,3-diacylglucosamine hydrolase activity"/>
    <property type="evidence" value="ECO:0007669"/>
    <property type="project" value="UniProtKB-UniRule"/>
</dbReference>
<dbReference type="GO" id="GO:0009245">
    <property type="term" value="P:lipid A biosynthetic process"/>
    <property type="evidence" value="ECO:0007669"/>
    <property type="project" value="UniProtKB-UniRule"/>
</dbReference>
<dbReference type="CDD" id="cd07398">
    <property type="entry name" value="MPP_YbbF-LpxH"/>
    <property type="match status" value="1"/>
</dbReference>
<dbReference type="Gene3D" id="3.60.21.10">
    <property type="match status" value="1"/>
</dbReference>
<dbReference type="HAMAP" id="MF_00575">
    <property type="entry name" value="LpxH"/>
    <property type="match status" value="1"/>
</dbReference>
<dbReference type="InterPro" id="IPR004843">
    <property type="entry name" value="Calcineurin-like_PHP_ApaH"/>
</dbReference>
<dbReference type="InterPro" id="IPR043461">
    <property type="entry name" value="LpxH-like"/>
</dbReference>
<dbReference type="InterPro" id="IPR029052">
    <property type="entry name" value="Metallo-depent_PP-like"/>
</dbReference>
<dbReference type="InterPro" id="IPR010138">
    <property type="entry name" value="UDP-diacylglucosamine_Hdrlase"/>
</dbReference>
<dbReference type="NCBIfam" id="TIGR01854">
    <property type="entry name" value="lipid_A_lpxH"/>
    <property type="match status" value="1"/>
</dbReference>
<dbReference type="NCBIfam" id="NF003743">
    <property type="entry name" value="PRK05340.1"/>
    <property type="match status" value="1"/>
</dbReference>
<dbReference type="PANTHER" id="PTHR34990:SF1">
    <property type="entry name" value="UDP-2,3-DIACYLGLUCOSAMINE HYDROLASE"/>
    <property type="match status" value="1"/>
</dbReference>
<dbReference type="PANTHER" id="PTHR34990">
    <property type="entry name" value="UDP-2,3-DIACYLGLUCOSAMINE HYDROLASE-RELATED"/>
    <property type="match status" value="1"/>
</dbReference>
<dbReference type="Pfam" id="PF00149">
    <property type="entry name" value="Metallophos"/>
    <property type="match status" value="1"/>
</dbReference>
<dbReference type="SUPFAM" id="SSF56300">
    <property type="entry name" value="Metallo-dependent phosphatases"/>
    <property type="match status" value="1"/>
</dbReference>
<sequence>MRTLFIGDLHLSADRLDITQAFTRFLDTELDDADALYILGDLFEVWVGDDIALPFALELAEKLKQVSQKLPVYFIHGNRDFMLGKQYARAAGMQILPEVTCLNLYGIETVILHGDSLCTLDKAYQRFRKLRSLSLARWLYGCLSKKTRQGIADKIRSNSKSSNQQKSYTIMDVEPNAVDALFAKTHTKHMIHGHTHRPAIHQLANGCQRIVVGDWYEQGSVLSVSAEGINLQSLPFEQTT</sequence>
<reference key="1">
    <citation type="submission" date="2007-02" db="EMBL/GenBank/DDBJ databases">
        <title>Complete sequence of chromosome of Shewanella baltica OS155.</title>
        <authorList>
            <consortium name="US DOE Joint Genome Institute"/>
            <person name="Copeland A."/>
            <person name="Lucas S."/>
            <person name="Lapidus A."/>
            <person name="Barry K."/>
            <person name="Detter J.C."/>
            <person name="Glavina del Rio T."/>
            <person name="Hammon N."/>
            <person name="Israni S."/>
            <person name="Dalin E."/>
            <person name="Tice H."/>
            <person name="Pitluck S."/>
            <person name="Sims D.R."/>
            <person name="Brettin T."/>
            <person name="Bruce D."/>
            <person name="Han C."/>
            <person name="Tapia R."/>
            <person name="Brainard J."/>
            <person name="Schmutz J."/>
            <person name="Larimer F."/>
            <person name="Land M."/>
            <person name="Hauser L."/>
            <person name="Kyrpides N."/>
            <person name="Mikhailova N."/>
            <person name="Brettar I."/>
            <person name="Klappenbach J."/>
            <person name="Konstantinidis K."/>
            <person name="Rodrigues J."/>
            <person name="Tiedje J."/>
            <person name="Richardson P."/>
        </authorList>
    </citation>
    <scope>NUCLEOTIDE SEQUENCE [LARGE SCALE GENOMIC DNA]</scope>
    <source>
        <strain>OS155 / ATCC BAA-1091</strain>
    </source>
</reference>
<feature type="chain" id="PRO_1000025081" description="UDP-2,3-diacylglucosamine hydrolase">
    <location>
        <begin position="1"/>
        <end position="240"/>
    </location>
</feature>
<feature type="binding site" evidence="1">
    <location>
        <position position="8"/>
    </location>
    <ligand>
        <name>Mn(2+)</name>
        <dbReference type="ChEBI" id="CHEBI:29035"/>
        <label>1</label>
    </ligand>
</feature>
<feature type="binding site" evidence="1">
    <location>
        <position position="10"/>
    </location>
    <ligand>
        <name>Mn(2+)</name>
        <dbReference type="ChEBI" id="CHEBI:29035"/>
        <label>1</label>
    </ligand>
</feature>
<feature type="binding site" evidence="1">
    <location>
        <position position="41"/>
    </location>
    <ligand>
        <name>Mn(2+)</name>
        <dbReference type="ChEBI" id="CHEBI:29035"/>
        <label>1</label>
    </ligand>
</feature>
<feature type="binding site" evidence="1">
    <location>
        <position position="41"/>
    </location>
    <ligand>
        <name>Mn(2+)</name>
        <dbReference type="ChEBI" id="CHEBI:29035"/>
        <label>2</label>
    </ligand>
</feature>
<feature type="binding site" evidence="1">
    <location>
        <begin position="78"/>
        <end position="79"/>
    </location>
    <ligand>
        <name>substrate</name>
    </ligand>
</feature>
<feature type="binding site" evidence="1">
    <location>
        <position position="78"/>
    </location>
    <ligand>
        <name>Mn(2+)</name>
        <dbReference type="ChEBI" id="CHEBI:29035"/>
        <label>2</label>
    </ligand>
</feature>
<feature type="binding site" evidence="1">
    <location>
        <position position="113"/>
    </location>
    <ligand>
        <name>Mn(2+)</name>
        <dbReference type="ChEBI" id="CHEBI:29035"/>
        <label>2</label>
    </ligand>
</feature>
<feature type="binding site" evidence="1">
    <location>
        <position position="121"/>
    </location>
    <ligand>
        <name>substrate</name>
    </ligand>
</feature>
<feature type="binding site" evidence="1">
    <location>
        <position position="159"/>
    </location>
    <ligand>
        <name>substrate</name>
    </ligand>
</feature>
<feature type="binding site" evidence="1">
    <location>
        <position position="163"/>
    </location>
    <ligand>
        <name>substrate</name>
    </ligand>
</feature>
<feature type="binding site" evidence="1">
    <location>
        <position position="166"/>
    </location>
    <ligand>
        <name>substrate</name>
    </ligand>
</feature>
<feature type="binding site" evidence="1">
    <location>
        <position position="194"/>
    </location>
    <ligand>
        <name>Mn(2+)</name>
        <dbReference type="ChEBI" id="CHEBI:29035"/>
        <label>2</label>
    </ligand>
</feature>
<feature type="binding site" evidence="1">
    <location>
        <position position="194"/>
    </location>
    <ligand>
        <name>substrate</name>
    </ligand>
</feature>
<feature type="binding site" evidence="1">
    <location>
        <position position="196"/>
    </location>
    <ligand>
        <name>Mn(2+)</name>
        <dbReference type="ChEBI" id="CHEBI:29035"/>
        <label>1</label>
    </ligand>
</feature>
<organism>
    <name type="scientific">Shewanella baltica (strain OS155 / ATCC BAA-1091)</name>
    <dbReference type="NCBI Taxonomy" id="325240"/>
    <lineage>
        <taxon>Bacteria</taxon>
        <taxon>Pseudomonadati</taxon>
        <taxon>Pseudomonadota</taxon>
        <taxon>Gammaproteobacteria</taxon>
        <taxon>Alteromonadales</taxon>
        <taxon>Shewanellaceae</taxon>
        <taxon>Shewanella</taxon>
    </lineage>
</organism>
<proteinExistence type="inferred from homology"/>
<comment type="function">
    <text evidence="1">Hydrolyzes the pyrophosphate bond of UDP-2,3-diacylglucosamine to yield 2,3-diacylglucosamine 1-phosphate (lipid X) and UMP by catalyzing the attack of water at the alpha-P atom. Involved in the biosynthesis of lipid A, a phosphorylated glycolipid that anchors the lipopolysaccharide to the outer membrane of the cell.</text>
</comment>
<comment type="catalytic activity">
    <reaction evidence="1">
        <text>UDP-2-N,3-O-bis[(3R)-3-hydroxytetradecanoyl]-alpha-D-glucosamine + H2O = 2-N,3-O-bis[(3R)-3-hydroxytetradecanoyl]-alpha-D-glucosaminyl 1-phosphate + UMP + 2 H(+)</text>
        <dbReference type="Rhea" id="RHEA:25213"/>
        <dbReference type="ChEBI" id="CHEBI:15377"/>
        <dbReference type="ChEBI" id="CHEBI:15378"/>
        <dbReference type="ChEBI" id="CHEBI:57865"/>
        <dbReference type="ChEBI" id="CHEBI:57957"/>
        <dbReference type="ChEBI" id="CHEBI:78847"/>
        <dbReference type="EC" id="3.6.1.54"/>
    </reaction>
</comment>
<comment type="cofactor">
    <cofactor evidence="1">
        <name>Mn(2+)</name>
        <dbReference type="ChEBI" id="CHEBI:29035"/>
    </cofactor>
    <text evidence="1">Binds 2 Mn(2+) ions per subunit in a binuclear metal center.</text>
</comment>
<comment type="pathway">
    <text evidence="1">Glycolipid biosynthesis; lipid IV(A) biosynthesis; lipid IV(A) from (3R)-3-hydroxytetradecanoyl-[acyl-carrier-protein] and UDP-N-acetyl-alpha-D-glucosamine: step 4/6.</text>
</comment>
<comment type="subcellular location">
    <subcellularLocation>
        <location evidence="1">Cell inner membrane</location>
        <topology evidence="1">Peripheral membrane protein</topology>
        <orientation evidence="1">Cytoplasmic side</orientation>
    </subcellularLocation>
</comment>
<comment type="similarity">
    <text evidence="1">Belongs to the LpxH family.</text>
</comment>
<protein>
    <recommendedName>
        <fullName evidence="1">UDP-2,3-diacylglucosamine hydrolase</fullName>
        <ecNumber evidence="1">3.6.1.54</ecNumber>
    </recommendedName>
    <alternativeName>
        <fullName evidence="1">UDP-2,3-diacylglucosamine diphosphatase</fullName>
    </alternativeName>
</protein>